<organism>
    <name type="scientific">Klebsiella pneumoniae (strain 342)</name>
    <dbReference type="NCBI Taxonomy" id="507522"/>
    <lineage>
        <taxon>Bacteria</taxon>
        <taxon>Pseudomonadati</taxon>
        <taxon>Pseudomonadota</taxon>
        <taxon>Gammaproteobacteria</taxon>
        <taxon>Enterobacterales</taxon>
        <taxon>Enterobacteriaceae</taxon>
        <taxon>Klebsiella/Raoultella group</taxon>
        <taxon>Klebsiella</taxon>
        <taxon>Klebsiella pneumoniae complex</taxon>
    </lineage>
</organism>
<name>SYD_KLEP3</name>
<protein>
    <recommendedName>
        <fullName evidence="1">Aspartate--tRNA ligase</fullName>
        <ecNumber evidence="1">6.1.1.12</ecNumber>
    </recommendedName>
    <alternativeName>
        <fullName evidence="1">Aspartyl-tRNA synthetase</fullName>
        <shortName evidence="1">AspRS</shortName>
    </alternativeName>
</protein>
<keyword id="KW-0030">Aminoacyl-tRNA synthetase</keyword>
<keyword id="KW-0067">ATP-binding</keyword>
<keyword id="KW-0963">Cytoplasm</keyword>
<keyword id="KW-0436">Ligase</keyword>
<keyword id="KW-0547">Nucleotide-binding</keyword>
<keyword id="KW-0648">Protein biosynthesis</keyword>
<evidence type="ECO:0000255" key="1">
    <source>
        <dbReference type="HAMAP-Rule" id="MF_00044"/>
    </source>
</evidence>
<comment type="function">
    <text evidence="1">Catalyzes the attachment of L-aspartate to tRNA(Asp) in a two-step reaction: L-aspartate is first activated by ATP to form Asp-AMP and then transferred to the acceptor end of tRNA(Asp).</text>
</comment>
<comment type="catalytic activity">
    <reaction evidence="1">
        <text>tRNA(Asp) + L-aspartate + ATP = L-aspartyl-tRNA(Asp) + AMP + diphosphate</text>
        <dbReference type="Rhea" id="RHEA:19649"/>
        <dbReference type="Rhea" id="RHEA-COMP:9660"/>
        <dbReference type="Rhea" id="RHEA-COMP:9678"/>
        <dbReference type="ChEBI" id="CHEBI:29991"/>
        <dbReference type="ChEBI" id="CHEBI:30616"/>
        <dbReference type="ChEBI" id="CHEBI:33019"/>
        <dbReference type="ChEBI" id="CHEBI:78442"/>
        <dbReference type="ChEBI" id="CHEBI:78516"/>
        <dbReference type="ChEBI" id="CHEBI:456215"/>
        <dbReference type="EC" id="6.1.1.12"/>
    </reaction>
</comment>
<comment type="subunit">
    <text evidence="1">Homodimer.</text>
</comment>
<comment type="subcellular location">
    <subcellularLocation>
        <location evidence="1">Cytoplasm</location>
    </subcellularLocation>
</comment>
<comment type="similarity">
    <text evidence="1">Belongs to the class-II aminoacyl-tRNA synthetase family. Type 1 subfamily.</text>
</comment>
<sequence length="595" mass="66418">MRTEYCGQLRQSHVGQQVTLCGWVNRRRDLGSLIFIDMRDREGIVQVFFDPDRADALKLASELRNEFCIQVTGTVRAREEKNINADMATGAIEVLASDLTIINRSESLPLDSNHVNTEEARLKYRYLDLRRPEMAQRLKIRAKITSFVRRFMDDHGFLDIETPMLTKATPEGARDYLVPSRVHKGKFYALPQSPQLFKQLLMMSGFDRYYQIVKCFRDEDLRADRQPEFTQIDVETSFMTAPQVREIMEAMVRQLWLEIKGVDLGDFPIMTFAEAERRYGSDKPDLRNPIELVDVADLLKSVEFAVFAGPANDPKGRVAALRVPGGASLTRKLIDEYGNFVKIYGAKGLAYIKVTERAKGMDGINSPVAKFLTAEIVEAILERTGAQDGDMIFFGADNKKVVADALGALRLKLGKDLSLTDESKWAPLWVIDFPMFEDDGEGGLTAMHHPFTSPKDMTADELKAAPEEAVANAYDMVINGYEVGGGSVRIHRGDMQQTVFGILGINEHEQREKFGFLLDALKYGTPPHAGLAFGLDRLTMLLTGTDNIRDVIAFPKTTAAACLMTEAPSFANPAALGELGIQVVEKEAKASLENK</sequence>
<accession>B5XQ00</accession>
<gene>
    <name evidence="1" type="primary">aspS</name>
    <name type="ordered locus">KPK_1904</name>
</gene>
<feature type="chain" id="PRO_1000091003" description="Aspartate--tRNA ligase">
    <location>
        <begin position="1"/>
        <end position="595"/>
    </location>
</feature>
<feature type="region of interest" description="Aspartate" evidence="1">
    <location>
        <begin position="195"/>
        <end position="198"/>
    </location>
</feature>
<feature type="binding site" evidence="1">
    <location>
        <position position="171"/>
    </location>
    <ligand>
        <name>L-aspartate</name>
        <dbReference type="ChEBI" id="CHEBI:29991"/>
    </ligand>
</feature>
<feature type="binding site" evidence="1">
    <location>
        <begin position="217"/>
        <end position="219"/>
    </location>
    <ligand>
        <name>ATP</name>
        <dbReference type="ChEBI" id="CHEBI:30616"/>
    </ligand>
</feature>
<feature type="binding site" evidence="1">
    <location>
        <position position="217"/>
    </location>
    <ligand>
        <name>L-aspartate</name>
        <dbReference type="ChEBI" id="CHEBI:29991"/>
    </ligand>
</feature>
<feature type="binding site" evidence="1">
    <location>
        <position position="226"/>
    </location>
    <ligand>
        <name>ATP</name>
        <dbReference type="ChEBI" id="CHEBI:30616"/>
    </ligand>
</feature>
<feature type="binding site" evidence="1">
    <location>
        <position position="448"/>
    </location>
    <ligand>
        <name>L-aspartate</name>
        <dbReference type="ChEBI" id="CHEBI:29991"/>
    </ligand>
</feature>
<feature type="binding site" evidence="1">
    <location>
        <position position="482"/>
    </location>
    <ligand>
        <name>ATP</name>
        <dbReference type="ChEBI" id="CHEBI:30616"/>
    </ligand>
</feature>
<feature type="binding site" evidence="1">
    <location>
        <position position="489"/>
    </location>
    <ligand>
        <name>L-aspartate</name>
        <dbReference type="ChEBI" id="CHEBI:29991"/>
    </ligand>
</feature>
<feature type="binding site" evidence="1">
    <location>
        <begin position="534"/>
        <end position="537"/>
    </location>
    <ligand>
        <name>ATP</name>
        <dbReference type="ChEBI" id="CHEBI:30616"/>
    </ligand>
</feature>
<reference key="1">
    <citation type="journal article" date="2008" name="PLoS Genet.">
        <title>Complete genome sequence of the N2-fixing broad host range endophyte Klebsiella pneumoniae 342 and virulence predictions verified in mice.</title>
        <authorList>
            <person name="Fouts D.E."/>
            <person name="Tyler H.L."/>
            <person name="DeBoy R.T."/>
            <person name="Daugherty S."/>
            <person name="Ren Q."/>
            <person name="Badger J.H."/>
            <person name="Durkin A.S."/>
            <person name="Huot H."/>
            <person name="Shrivastava S."/>
            <person name="Kothari S."/>
            <person name="Dodson R.J."/>
            <person name="Mohamoud Y."/>
            <person name="Khouri H."/>
            <person name="Roesch L.F.W."/>
            <person name="Krogfelt K.A."/>
            <person name="Struve C."/>
            <person name="Triplett E.W."/>
            <person name="Methe B.A."/>
        </authorList>
    </citation>
    <scope>NUCLEOTIDE SEQUENCE [LARGE SCALE GENOMIC DNA]</scope>
    <source>
        <strain>342</strain>
    </source>
</reference>
<dbReference type="EC" id="6.1.1.12" evidence="1"/>
<dbReference type="EMBL" id="CP000964">
    <property type="protein sequence ID" value="ACI11929.1"/>
    <property type="molecule type" value="Genomic_DNA"/>
</dbReference>
<dbReference type="SMR" id="B5XQ00"/>
<dbReference type="KEGG" id="kpe:KPK_1904"/>
<dbReference type="HOGENOM" id="CLU_014330_3_2_6"/>
<dbReference type="Proteomes" id="UP000001734">
    <property type="component" value="Chromosome"/>
</dbReference>
<dbReference type="GO" id="GO:0005737">
    <property type="term" value="C:cytoplasm"/>
    <property type="evidence" value="ECO:0007669"/>
    <property type="project" value="UniProtKB-SubCell"/>
</dbReference>
<dbReference type="GO" id="GO:0004815">
    <property type="term" value="F:aspartate-tRNA ligase activity"/>
    <property type="evidence" value="ECO:0007669"/>
    <property type="project" value="UniProtKB-UniRule"/>
</dbReference>
<dbReference type="GO" id="GO:0005524">
    <property type="term" value="F:ATP binding"/>
    <property type="evidence" value="ECO:0007669"/>
    <property type="project" value="UniProtKB-UniRule"/>
</dbReference>
<dbReference type="GO" id="GO:0003676">
    <property type="term" value="F:nucleic acid binding"/>
    <property type="evidence" value="ECO:0007669"/>
    <property type="project" value="InterPro"/>
</dbReference>
<dbReference type="GO" id="GO:0006422">
    <property type="term" value="P:aspartyl-tRNA aminoacylation"/>
    <property type="evidence" value="ECO:0007669"/>
    <property type="project" value="UniProtKB-UniRule"/>
</dbReference>
<dbReference type="CDD" id="cd00777">
    <property type="entry name" value="AspRS_core"/>
    <property type="match status" value="1"/>
</dbReference>
<dbReference type="CDD" id="cd04317">
    <property type="entry name" value="EcAspRS_like_N"/>
    <property type="match status" value="1"/>
</dbReference>
<dbReference type="FunFam" id="2.40.50.140:FF:000080">
    <property type="entry name" value="Aspartate--tRNA ligase"/>
    <property type="match status" value="1"/>
</dbReference>
<dbReference type="FunFam" id="3.30.1360.30:FF:000001">
    <property type="entry name" value="Aspartate--tRNA ligase"/>
    <property type="match status" value="1"/>
</dbReference>
<dbReference type="Gene3D" id="3.30.930.10">
    <property type="entry name" value="Bira Bifunctional Protein, Domain 2"/>
    <property type="match status" value="1"/>
</dbReference>
<dbReference type="Gene3D" id="3.30.1360.30">
    <property type="entry name" value="GAD-like domain"/>
    <property type="match status" value="1"/>
</dbReference>
<dbReference type="Gene3D" id="2.40.50.140">
    <property type="entry name" value="Nucleic acid-binding proteins"/>
    <property type="match status" value="1"/>
</dbReference>
<dbReference type="HAMAP" id="MF_00044">
    <property type="entry name" value="Asp_tRNA_synth_type1"/>
    <property type="match status" value="1"/>
</dbReference>
<dbReference type="InterPro" id="IPR004364">
    <property type="entry name" value="Aa-tRNA-synt_II"/>
</dbReference>
<dbReference type="InterPro" id="IPR006195">
    <property type="entry name" value="aa-tRNA-synth_II"/>
</dbReference>
<dbReference type="InterPro" id="IPR045864">
    <property type="entry name" value="aa-tRNA-synth_II/BPL/LPL"/>
</dbReference>
<dbReference type="InterPro" id="IPR004524">
    <property type="entry name" value="Asp-tRNA-ligase_1"/>
</dbReference>
<dbReference type="InterPro" id="IPR047089">
    <property type="entry name" value="Asp-tRNA-ligase_1_N"/>
</dbReference>
<dbReference type="InterPro" id="IPR002312">
    <property type="entry name" value="Asp/Asn-tRNA-synth_IIb"/>
</dbReference>
<dbReference type="InterPro" id="IPR047090">
    <property type="entry name" value="AspRS_core"/>
</dbReference>
<dbReference type="InterPro" id="IPR004115">
    <property type="entry name" value="GAD-like_sf"/>
</dbReference>
<dbReference type="InterPro" id="IPR029351">
    <property type="entry name" value="GAD_dom"/>
</dbReference>
<dbReference type="InterPro" id="IPR012340">
    <property type="entry name" value="NA-bd_OB-fold"/>
</dbReference>
<dbReference type="InterPro" id="IPR004365">
    <property type="entry name" value="NA-bd_OB_tRNA"/>
</dbReference>
<dbReference type="NCBIfam" id="TIGR00459">
    <property type="entry name" value="aspS_bact"/>
    <property type="match status" value="1"/>
</dbReference>
<dbReference type="NCBIfam" id="NF001750">
    <property type="entry name" value="PRK00476.1"/>
    <property type="match status" value="1"/>
</dbReference>
<dbReference type="PANTHER" id="PTHR22594:SF5">
    <property type="entry name" value="ASPARTATE--TRNA LIGASE, MITOCHONDRIAL"/>
    <property type="match status" value="1"/>
</dbReference>
<dbReference type="PANTHER" id="PTHR22594">
    <property type="entry name" value="ASPARTYL/LYSYL-TRNA SYNTHETASE"/>
    <property type="match status" value="1"/>
</dbReference>
<dbReference type="Pfam" id="PF02938">
    <property type="entry name" value="GAD"/>
    <property type="match status" value="1"/>
</dbReference>
<dbReference type="Pfam" id="PF00152">
    <property type="entry name" value="tRNA-synt_2"/>
    <property type="match status" value="1"/>
</dbReference>
<dbReference type="Pfam" id="PF01336">
    <property type="entry name" value="tRNA_anti-codon"/>
    <property type="match status" value="1"/>
</dbReference>
<dbReference type="PRINTS" id="PR01042">
    <property type="entry name" value="TRNASYNTHASP"/>
</dbReference>
<dbReference type="SUPFAM" id="SSF55681">
    <property type="entry name" value="Class II aaRS and biotin synthetases"/>
    <property type="match status" value="1"/>
</dbReference>
<dbReference type="SUPFAM" id="SSF55261">
    <property type="entry name" value="GAD domain-like"/>
    <property type="match status" value="1"/>
</dbReference>
<dbReference type="SUPFAM" id="SSF50249">
    <property type="entry name" value="Nucleic acid-binding proteins"/>
    <property type="match status" value="1"/>
</dbReference>
<dbReference type="PROSITE" id="PS50862">
    <property type="entry name" value="AA_TRNA_LIGASE_II"/>
    <property type="match status" value="1"/>
</dbReference>
<proteinExistence type="inferred from homology"/>